<dbReference type="EC" id="1.7.1.13" evidence="1"/>
<dbReference type="EMBL" id="CP000378">
    <property type="protein sequence ID" value="ABF77026.1"/>
    <property type="molecule type" value="Genomic_DNA"/>
</dbReference>
<dbReference type="SMR" id="Q1BTM9"/>
<dbReference type="HOGENOM" id="CLU_054738_0_0_4"/>
<dbReference type="UniPathway" id="UPA00392"/>
<dbReference type="GO" id="GO:0005737">
    <property type="term" value="C:cytoplasm"/>
    <property type="evidence" value="ECO:0007669"/>
    <property type="project" value="UniProtKB-SubCell"/>
</dbReference>
<dbReference type="GO" id="GO:0033739">
    <property type="term" value="F:preQ1 synthase activity"/>
    <property type="evidence" value="ECO:0007669"/>
    <property type="project" value="UniProtKB-UniRule"/>
</dbReference>
<dbReference type="GO" id="GO:0008616">
    <property type="term" value="P:queuosine biosynthetic process"/>
    <property type="evidence" value="ECO:0007669"/>
    <property type="project" value="UniProtKB-UniRule"/>
</dbReference>
<dbReference type="GO" id="GO:0006400">
    <property type="term" value="P:tRNA modification"/>
    <property type="evidence" value="ECO:0007669"/>
    <property type="project" value="UniProtKB-UniRule"/>
</dbReference>
<dbReference type="Gene3D" id="3.30.1130.10">
    <property type="match status" value="2"/>
</dbReference>
<dbReference type="HAMAP" id="MF_00817">
    <property type="entry name" value="QueF_type2"/>
    <property type="match status" value="1"/>
</dbReference>
<dbReference type="InterPro" id="IPR043133">
    <property type="entry name" value="GTP-CH-I_C/QueF"/>
</dbReference>
<dbReference type="InterPro" id="IPR050084">
    <property type="entry name" value="NADPH_dep_7-cyano-7-deazaG_red"/>
</dbReference>
<dbReference type="InterPro" id="IPR029500">
    <property type="entry name" value="QueF"/>
</dbReference>
<dbReference type="InterPro" id="IPR029139">
    <property type="entry name" value="QueF_N"/>
</dbReference>
<dbReference type="InterPro" id="IPR016428">
    <property type="entry name" value="QueF_type2"/>
</dbReference>
<dbReference type="NCBIfam" id="TIGR03138">
    <property type="entry name" value="QueF"/>
    <property type="match status" value="1"/>
</dbReference>
<dbReference type="PANTHER" id="PTHR34354">
    <property type="entry name" value="NADPH-DEPENDENT 7-CYANO-7-DEAZAGUANINE REDUCTASE"/>
    <property type="match status" value="1"/>
</dbReference>
<dbReference type="PANTHER" id="PTHR34354:SF1">
    <property type="entry name" value="NADPH-DEPENDENT 7-CYANO-7-DEAZAGUANINE REDUCTASE"/>
    <property type="match status" value="1"/>
</dbReference>
<dbReference type="Pfam" id="PF14489">
    <property type="entry name" value="QueF"/>
    <property type="match status" value="1"/>
</dbReference>
<dbReference type="Pfam" id="PF14819">
    <property type="entry name" value="QueF_N"/>
    <property type="match status" value="1"/>
</dbReference>
<dbReference type="PIRSF" id="PIRSF004750">
    <property type="entry name" value="Nitrile_oxidored_YqcD_prd"/>
    <property type="match status" value="1"/>
</dbReference>
<dbReference type="SUPFAM" id="SSF55620">
    <property type="entry name" value="Tetrahydrobiopterin biosynthesis enzymes-like"/>
    <property type="match status" value="1"/>
</dbReference>
<evidence type="ECO:0000255" key="1">
    <source>
        <dbReference type="HAMAP-Rule" id="MF_00817"/>
    </source>
</evidence>
<protein>
    <recommendedName>
        <fullName evidence="1">NADPH-dependent 7-cyano-7-deazaguanine reductase</fullName>
        <ecNumber evidence="1">1.7.1.13</ecNumber>
    </recommendedName>
    <alternativeName>
        <fullName evidence="1">7-cyano-7-carbaguanine reductase</fullName>
    </alternativeName>
    <alternativeName>
        <fullName evidence="1">NADPH-dependent nitrile oxidoreductase</fullName>
    </alternativeName>
    <alternativeName>
        <fullName evidence="1">PreQ(0) reductase</fullName>
    </alternativeName>
</protein>
<feature type="chain" id="PRO_1000062327" description="NADPH-dependent 7-cyano-7-deazaguanine reductase">
    <location>
        <begin position="1"/>
        <end position="276"/>
    </location>
</feature>
<feature type="active site" description="Thioimide intermediate" evidence="1">
    <location>
        <position position="183"/>
    </location>
</feature>
<feature type="active site" description="Proton donor" evidence="1">
    <location>
        <position position="190"/>
    </location>
</feature>
<feature type="binding site" evidence="1">
    <location>
        <begin position="80"/>
        <end position="82"/>
    </location>
    <ligand>
        <name>substrate</name>
    </ligand>
</feature>
<feature type="binding site" evidence="1">
    <location>
        <begin position="82"/>
        <end position="83"/>
    </location>
    <ligand>
        <name>NADPH</name>
        <dbReference type="ChEBI" id="CHEBI:57783"/>
    </ligand>
</feature>
<feature type="binding site" evidence="1">
    <location>
        <begin position="222"/>
        <end position="223"/>
    </location>
    <ligand>
        <name>substrate</name>
    </ligand>
</feature>
<feature type="binding site" evidence="1">
    <location>
        <begin position="251"/>
        <end position="252"/>
    </location>
    <ligand>
        <name>NADPH</name>
        <dbReference type="ChEBI" id="CHEBI:57783"/>
    </ligand>
</feature>
<reference key="1">
    <citation type="submission" date="2006-05" db="EMBL/GenBank/DDBJ databases">
        <title>Complete sequence of chromosome 1 of Burkholderia cenocepacia AU 1054.</title>
        <authorList>
            <consortium name="US DOE Joint Genome Institute"/>
            <person name="Copeland A."/>
            <person name="Lucas S."/>
            <person name="Lapidus A."/>
            <person name="Barry K."/>
            <person name="Detter J.C."/>
            <person name="Glavina del Rio T."/>
            <person name="Hammon N."/>
            <person name="Israni S."/>
            <person name="Dalin E."/>
            <person name="Tice H."/>
            <person name="Pitluck S."/>
            <person name="Chain P."/>
            <person name="Malfatti S."/>
            <person name="Shin M."/>
            <person name="Vergez L."/>
            <person name="Schmutz J."/>
            <person name="Larimer F."/>
            <person name="Land M."/>
            <person name="Hauser L."/>
            <person name="Kyrpides N."/>
            <person name="Lykidis A."/>
            <person name="LiPuma J.J."/>
            <person name="Konstantinidis K."/>
            <person name="Tiedje J.M."/>
            <person name="Richardson P."/>
        </authorList>
    </citation>
    <scope>NUCLEOTIDE SEQUENCE [LARGE SCALE GENOMIC DNA]</scope>
    <source>
        <strain>AU 1054</strain>
    </source>
</reference>
<sequence>MNPEHSPLGKATVYAAQYDASLLFPIPRAGAREQLGITSALPFFGTDIWNAYELSWLNARGKPQVAIATFYVPAESPNIVESKSFKLYLGSFAQSKFDSVDAVRDVLKRDVSAACGASVSVQLVSPHDFAKLEMDELDGLSLDRLDLDTDVYEPDPSLLSAADGENEAPVEETLVSDLLRSNCPVTGQPDWGSVQIHYVGPQIDHAGLLRYIISFRNHTGFHEQCVERIFLDILHACKPVKLAVYARYTRRGGLDINPFRTNYNQPMPDNARTARQ</sequence>
<proteinExistence type="inferred from homology"/>
<organism>
    <name type="scientific">Burkholderia orbicola (strain AU 1054)</name>
    <dbReference type="NCBI Taxonomy" id="331271"/>
    <lineage>
        <taxon>Bacteria</taxon>
        <taxon>Pseudomonadati</taxon>
        <taxon>Pseudomonadota</taxon>
        <taxon>Betaproteobacteria</taxon>
        <taxon>Burkholderiales</taxon>
        <taxon>Burkholderiaceae</taxon>
        <taxon>Burkholderia</taxon>
        <taxon>Burkholderia cepacia complex</taxon>
        <taxon>Burkholderia orbicola</taxon>
    </lineage>
</organism>
<name>QUEF_BURO1</name>
<comment type="function">
    <text evidence="1">Catalyzes the NADPH-dependent reduction of 7-cyano-7-deazaguanine (preQ0) to 7-aminomethyl-7-deazaguanine (preQ1).</text>
</comment>
<comment type="catalytic activity">
    <reaction evidence="1">
        <text>7-aminomethyl-7-carbaguanine + 2 NADP(+) = 7-cyano-7-deazaguanine + 2 NADPH + 3 H(+)</text>
        <dbReference type="Rhea" id="RHEA:13409"/>
        <dbReference type="ChEBI" id="CHEBI:15378"/>
        <dbReference type="ChEBI" id="CHEBI:45075"/>
        <dbReference type="ChEBI" id="CHEBI:57783"/>
        <dbReference type="ChEBI" id="CHEBI:58349"/>
        <dbReference type="ChEBI" id="CHEBI:58703"/>
        <dbReference type="EC" id="1.7.1.13"/>
    </reaction>
</comment>
<comment type="pathway">
    <text evidence="1">tRNA modification; tRNA-queuosine biosynthesis.</text>
</comment>
<comment type="subunit">
    <text evidence="1">Homodimer.</text>
</comment>
<comment type="subcellular location">
    <subcellularLocation>
        <location evidence="1">Cytoplasm</location>
    </subcellularLocation>
</comment>
<comment type="similarity">
    <text evidence="1">Belongs to the GTP cyclohydrolase I family. QueF type 2 subfamily.</text>
</comment>
<keyword id="KW-0963">Cytoplasm</keyword>
<keyword id="KW-0521">NADP</keyword>
<keyword id="KW-0560">Oxidoreductase</keyword>
<keyword id="KW-0671">Queuosine biosynthesis</keyword>
<gene>
    <name evidence="1" type="primary">queF</name>
    <name type="ordered locus">Bcen_2125</name>
</gene>
<accession>Q1BTM9</accession>